<name>AKR2A_ARATH</name>
<feature type="chain" id="PRO_0000067059" description="Ankyrin repeat domain-containing protein 2A">
    <location>
        <begin position="1"/>
        <end position="342"/>
    </location>
</feature>
<feature type="repeat" description="ANK 1" evidence="1">
    <location>
        <begin position="217"/>
        <end position="246"/>
    </location>
</feature>
<feature type="repeat" description="ANK 2" evidence="1">
    <location>
        <begin position="250"/>
        <end position="279"/>
    </location>
</feature>
<feature type="repeat" description="ANK 3" evidence="1">
    <location>
        <begin position="283"/>
        <end position="312"/>
    </location>
</feature>
<feature type="repeat" description="ANK 4" evidence="1">
    <location>
        <begin position="316"/>
        <end position="342"/>
    </location>
</feature>
<feature type="region of interest" description="Disordered" evidence="2">
    <location>
        <begin position="1"/>
        <end position="41"/>
    </location>
</feature>
<feature type="compositionally biased region" description="Basic and acidic residues" evidence="2">
    <location>
        <begin position="12"/>
        <end position="26"/>
    </location>
</feature>
<feature type="compositionally biased region" description="Low complexity" evidence="2">
    <location>
        <begin position="27"/>
        <end position="37"/>
    </location>
</feature>
<feature type="binding site" evidence="8">
    <location>
        <position position="223"/>
    </location>
    <ligand>
        <name>a 1,2-diacyl-3-O-(beta-D-galactosyl)-sn-glycerol</name>
        <dbReference type="ChEBI" id="CHEBI:17615"/>
    </ligand>
</feature>
<feature type="binding site" evidence="8">
    <location>
        <position position="246"/>
    </location>
    <ligand>
        <name>a 1,2-diacyl-3-O-(beta-D-galactosyl)-sn-glycerol</name>
        <dbReference type="ChEBI" id="CHEBI:17615"/>
    </ligand>
</feature>
<feature type="binding site" evidence="8">
    <location>
        <position position="294"/>
    </location>
    <ligand>
        <name>a 1,2-diacyl-sn-glycero-3-phospho-(1'-sn-glycerol)</name>
        <dbReference type="ChEBI" id="CHEBI:64716"/>
    </ligand>
</feature>
<feature type="binding site" evidence="8">
    <location>
        <position position="296"/>
    </location>
    <ligand>
        <name>a 1,2-diacyl-sn-glycero-3-phospho-(1'-sn-glycerol)</name>
        <dbReference type="ChEBI" id="CHEBI:64716"/>
    </ligand>
</feature>
<feature type="mutagenesis site" description="In akr2a-1; small plants with small and curled rosette leaves, as well as delayed flowering, especially in chilling temperature conditions. Abnormal abaxial epidermal wavy cell shape and absence of cell boundaries between the neighboring surface cells. Impaired interaction with APX3." evidence="5">
    <original>S</original>
    <variation>F</variation>
    <location>
        <position position="25"/>
    </location>
</feature>
<feature type="mutagenesis site" description="In akr2a-3; small plants with small and curled rosette leaves, as well as delayed flowering, especially in chilling temperature conditions. Abnormal abaxial epidermal wavy cell shape and absence of cell boundaries between the neighboring surface cells. Impaired interaction with APX3." evidence="5">
    <original>P</original>
    <variation>L</variation>
    <location>
        <position position="113"/>
    </location>
</feature>
<feature type="mutagenesis site" description="In akr2a-6; small plants with small and curled rosette leaves, as well as delayed flowering, especially in chilling temperature conditions. Reduced interaction with APX3." evidence="5">
    <original>E</original>
    <variation>K</variation>
    <location>
        <position position="150"/>
    </location>
</feature>
<feature type="mutagenesis site" description="Reduced binding to monogalactosyldiacylglycerol (MGDG)." evidence="8">
    <original>H</original>
    <variation>A</variation>
    <location>
        <position position="223"/>
    </location>
</feature>
<feature type="mutagenesis site" description="Reduced binding to monogalactosyldiacylglycerol (MGDG) and phosphatidylglycerol (PG)." evidence="8">
    <original>E</original>
    <variation>A</variation>
    <location>
        <position position="246"/>
    </location>
</feature>
<feature type="mutagenesis site" description="Reduced binding to phosphatidylglycerol (PG)." evidence="8">
    <original>Y</original>
    <variation>A</variation>
    <location>
        <position position="294"/>
    </location>
</feature>
<feature type="mutagenesis site" description="Reduced binding to phosphatidylglycerol (PG)." evidence="8">
    <original>R</original>
    <variation>A</variation>
    <location>
        <position position="296"/>
    </location>
</feature>
<feature type="sequence conflict" description="In Ref. 1; AAC33264." evidence="10" ref="1">
    <original>N</original>
    <variation>T</variation>
    <location>
        <position position="243"/>
    </location>
</feature>
<feature type="sequence conflict" description="In Ref. 2; AAD10949." evidence="10" ref="2">
    <original>C</original>
    <variation>S</variation>
    <location>
        <position position="299"/>
    </location>
</feature>
<feature type="helix" evidence="11">
    <location>
        <begin position="221"/>
        <end position="228"/>
    </location>
</feature>
<feature type="helix" evidence="11">
    <location>
        <begin position="231"/>
        <end position="239"/>
    </location>
</feature>
<feature type="helix" evidence="11">
    <location>
        <begin position="254"/>
        <end position="261"/>
    </location>
</feature>
<feature type="helix" evidence="11">
    <location>
        <begin position="264"/>
        <end position="273"/>
    </location>
</feature>
<feature type="helix" evidence="11">
    <location>
        <begin position="287"/>
        <end position="293"/>
    </location>
</feature>
<feature type="helix" evidence="11">
    <location>
        <begin position="297"/>
        <end position="305"/>
    </location>
</feature>
<feature type="helix" evidence="11">
    <location>
        <begin position="320"/>
        <end position="326"/>
    </location>
</feature>
<feature type="helix" evidence="11">
    <location>
        <begin position="330"/>
        <end position="336"/>
    </location>
</feature>
<feature type="turn" evidence="11">
    <location>
        <begin position="337"/>
        <end position="339"/>
    </location>
</feature>
<proteinExistence type="evidence at protein level"/>
<accession>Q9SAR5</accession>
<accession>O81128</accession>
<accession>Q9SVX0</accession>
<protein>
    <recommendedName>
        <fullName evidence="9">Ankyrin repeat domain-containing protein 2A</fullName>
        <shortName>AtAKR2</shortName>
    </recommendedName>
</protein>
<comment type="function">
    <text evidence="3 4 5 8">Exhibits chaperone activity toward chloroplast outer envelope membrane, mitochondrion outer membrane, endoplasmic reticulum membrane and peroxisomal proteins, by recruiting specific proteins containing a single transmembrane associated with an AKR2A-binding sequence (ABS) and subsequently binding glycolipids (e.g. monogalactosyldiacylglycerol (MGDG) and phosphatidylglycerol (PG)) present in the membrane of the target organelle (PubMed:18193034, PubMed:20215589, PubMed:25203210). Seems to be involved in the regulation of hydrogen peroxide levels during biotic and abiotic stresses by optimizing the ascorbate peroxidase 3 (APX3) hydrogen peroxide-degrading activity. This regulation might be monitored by GRF6. Cytosolic targeting factor for chloroplast outer membrane (COM) proteins that mediates sorting and targeting of nascent chloroplast outer envelope membrane (OEM) proteins to the chloroplast. Facilitates the targeting of OEP7 to chloroplasts (PubMed:18193034). Facilitates the targeting of APX3 to peroxisomes. Involved in cellular metabolism (e.g. peroxisome activity) and required for plant growth and development (PubMed:20215589).</text>
</comment>
<comment type="subunit">
    <text evidence="3 4 5 6 7 8">Interacts with TOM20-4, CYTB5-E, CBR1, APX3, APX5, TOC34 and GRF6. Binds to chloroplast outer envelope membrane (OEM) protein targeting signals, as well as to chloroplasts. Interacts with OEP7 (PubMed:18193034). Binds to HSP17.8 via its ankyrin repeats, this interaction enhances chaperone activity and chloroplast binding. Also interacts with HSP17.4A, HSP17.6A and HSP18.1 (PubMed:21730198). Binds specifically to two chloroplast glycolipids, monogalactosyldiacylglycerol (MGDG) and phosphatidylglycerol (PG) (PubMed:25203210).</text>
</comment>
<comment type="subcellular location">
    <subcellularLocation>
        <location evidence="5">Cytoplasm</location>
    </subcellularLocation>
    <subcellularLocation>
        <location evidence="5">Nucleus</location>
    </subcellularLocation>
    <subcellularLocation>
        <location evidence="8">Plastid</location>
        <location evidence="8">Chloroplast outer membrane</location>
        <topology evidence="8">Peripheral membrane protein</topology>
        <orientation evidence="8">Cytoplasmic side</orientation>
    </subcellularLocation>
</comment>
<comment type="alternative products">
    <event type="alternative splicing"/>
    <isoform>
        <id>Q9SAR5-1</id>
        <name>1</name>
        <sequence type="displayed"/>
    </isoform>
    <text>A number of isoforms are produced. According to EST sequences.</text>
</comment>
<comment type="tissue specificity">
    <text evidence="3">Ubiquitously expressed at basal level.</text>
</comment>
<comment type="domain">
    <text evidence="8">The ankyrin repeats (ANK) mediate interactions with hexoses-containing lipids present in organellar membranes (e.g. chloroplast), such as monogalactosyldiacylglycerol (MGDG) and phosphatidylglycerol (PG).</text>
</comment>
<comment type="disruption phenotype">
    <text evidence="4 5">Lethal chlorotic phenotype when homozygote (PubMed:20215589). Reduced levels of chloroplast proteins, including outer envelope membrane (OEM) proteins. Defective chloroplast biogenesis (PubMed:18193034). Reduced APX3 levels and reduced targeting of APX3 to peroxisomes. Compromised peroxisomal function leading to increased sensitivity to aminotriazole during seed germination and shorter hypocotyls in darkness in the absence of sucrose (PubMed:20215589).</text>
</comment>
<comment type="sequence caution" evidence="10">
    <conflict type="erroneous initiation">
        <sequence resource="EMBL-CDS" id="AAC33264"/>
    </conflict>
    <text>Extended N-terminus.</text>
</comment>
<dbReference type="EMBL" id="AF034387">
    <property type="protein sequence ID" value="AAC33264.2"/>
    <property type="status" value="ALT_INIT"/>
    <property type="molecule type" value="mRNA"/>
</dbReference>
<dbReference type="EMBL" id="U70425">
    <property type="protein sequence ID" value="AAD10949.1"/>
    <property type="molecule type" value="mRNA"/>
</dbReference>
<dbReference type="EMBL" id="AL117188">
    <property type="protein sequence ID" value="CAB54873.1"/>
    <property type="molecule type" value="Genomic_DNA"/>
</dbReference>
<dbReference type="EMBL" id="AL161587">
    <property type="protein sequence ID" value="CAB80261.1"/>
    <property type="molecule type" value="Genomic_DNA"/>
</dbReference>
<dbReference type="EMBL" id="CP002687">
    <property type="protein sequence ID" value="AEE86513.1"/>
    <property type="molecule type" value="Genomic_DNA"/>
</dbReference>
<dbReference type="EMBL" id="CP002687">
    <property type="protein sequence ID" value="AEE86515.1"/>
    <property type="molecule type" value="Genomic_DNA"/>
</dbReference>
<dbReference type="EMBL" id="CP002687">
    <property type="protein sequence ID" value="AEE86516.1"/>
    <property type="molecule type" value="Genomic_DNA"/>
</dbReference>
<dbReference type="EMBL" id="AF386982">
    <property type="protein sequence ID" value="AAK62427.1"/>
    <property type="molecule type" value="mRNA"/>
</dbReference>
<dbReference type="EMBL" id="AY081477">
    <property type="protein sequence ID" value="AAM10039.1"/>
    <property type="molecule type" value="mRNA"/>
</dbReference>
<dbReference type="EMBL" id="AY087377">
    <property type="protein sequence ID" value="AAM64927.1"/>
    <property type="molecule type" value="mRNA"/>
</dbReference>
<dbReference type="PIR" id="T41742">
    <property type="entry name" value="T41742"/>
</dbReference>
<dbReference type="RefSeq" id="NP_195270.1">
    <molecule id="Q9SAR5-1"/>
    <property type="nucleotide sequence ID" value="NM_119710.5"/>
</dbReference>
<dbReference type="RefSeq" id="NP_849497.1">
    <molecule id="Q9SAR5-1"/>
    <property type="nucleotide sequence ID" value="NM_179166.1"/>
</dbReference>
<dbReference type="RefSeq" id="NP_849498.1">
    <molecule id="Q9SAR5-1"/>
    <property type="nucleotide sequence ID" value="NM_179167.2"/>
</dbReference>
<dbReference type="PDB" id="4TUM">
    <property type="method" value="X-ray"/>
    <property type="resolution" value="2.30 A"/>
    <property type="chains" value="A/B/C/D/E=211-342"/>
</dbReference>
<dbReference type="PDB" id="5EID">
    <property type="method" value="X-ray"/>
    <property type="resolution" value="2.00 A"/>
    <property type="chains" value="A=211-342"/>
</dbReference>
<dbReference type="PDBsum" id="4TUM"/>
<dbReference type="PDBsum" id="5EID"/>
<dbReference type="SMR" id="Q9SAR5"/>
<dbReference type="BioGRID" id="14979">
    <property type="interactions" value="18"/>
</dbReference>
<dbReference type="FunCoup" id="Q9SAR5">
    <property type="interactions" value="2922"/>
</dbReference>
<dbReference type="IntAct" id="Q9SAR5">
    <property type="interactions" value="1"/>
</dbReference>
<dbReference type="STRING" id="3702.Q9SAR5"/>
<dbReference type="iPTMnet" id="Q9SAR5"/>
<dbReference type="PaxDb" id="3702-AT4G35450.5"/>
<dbReference type="EnsemblPlants" id="AT4G35450.1">
    <molecule id="Q9SAR5-1"/>
    <property type="protein sequence ID" value="AT4G35450.1"/>
    <property type="gene ID" value="AT4G35450"/>
</dbReference>
<dbReference type="EnsemblPlants" id="AT4G35450.2">
    <molecule id="Q9SAR5-1"/>
    <property type="protein sequence ID" value="AT4G35450.2"/>
    <property type="gene ID" value="AT4G35450"/>
</dbReference>
<dbReference type="EnsemblPlants" id="AT4G35450.3">
    <molecule id="Q9SAR5-1"/>
    <property type="protein sequence ID" value="AT4G35450.3"/>
    <property type="gene ID" value="AT4G35450"/>
</dbReference>
<dbReference type="GeneID" id="829697"/>
<dbReference type="Gramene" id="AT4G35450.1">
    <molecule id="Q9SAR5-1"/>
    <property type="protein sequence ID" value="AT4G35450.1"/>
    <property type="gene ID" value="AT4G35450"/>
</dbReference>
<dbReference type="Gramene" id="AT4G35450.2">
    <molecule id="Q9SAR5-1"/>
    <property type="protein sequence ID" value="AT4G35450.2"/>
    <property type="gene ID" value="AT4G35450"/>
</dbReference>
<dbReference type="Gramene" id="AT4G35450.3">
    <molecule id="Q9SAR5-1"/>
    <property type="protein sequence ID" value="AT4G35450.3"/>
    <property type="gene ID" value="AT4G35450"/>
</dbReference>
<dbReference type="KEGG" id="ath:AT4G35450"/>
<dbReference type="Araport" id="AT4G35450"/>
<dbReference type="TAIR" id="AT4G35450">
    <property type="gene designation" value="AKR2"/>
</dbReference>
<dbReference type="eggNOG" id="KOG0504">
    <property type="taxonomic scope" value="Eukaryota"/>
</dbReference>
<dbReference type="InParanoid" id="Q9SAR5"/>
<dbReference type="OrthoDB" id="341259at2759"/>
<dbReference type="PhylomeDB" id="Q9SAR5"/>
<dbReference type="CD-CODE" id="4299E36E">
    <property type="entry name" value="Nucleolus"/>
</dbReference>
<dbReference type="EvolutionaryTrace" id="Q9SAR5"/>
<dbReference type="PRO" id="PR:Q9SAR5"/>
<dbReference type="Proteomes" id="UP000006548">
    <property type="component" value="Chromosome 4"/>
</dbReference>
<dbReference type="ExpressionAtlas" id="Q9SAR5">
    <property type="expression patterns" value="baseline and differential"/>
</dbReference>
<dbReference type="GO" id="GO:0009707">
    <property type="term" value="C:chloroplast outer membrane"/>
    <property type="evidence" value="ECO:0000314"/>
    <property type="project" value="UniProtKB"/>
</dbReference>
<dbReference type="GO" id="GO:0005737">
    <property type="term" value="C:cytoplasm"/>
    <property type="evidence" value="ECO:0000314"/>
    <property type="project" value="UniProtKB"/>
</dbReference>
<dbReference type="GO" id="GO:0005634">
    <property type="term" value="C:nucleus"/>
    <property type="evidence" value="ECO:0000314"/>
    <property type="project" value="UniProtKB"/>
</dbReference>
<dbReference type="GO" id="GO:0030941">
    <property type="term" value="F:chloroplast targeting sequence binding"/>
    <property type="evidence" value="ECO:0000314"/>
    <property type="project" value="UniProtKB"/>
</dbReference>
<dbReference type="GO" id="GO:0051861">
    <property type="term" value="F:glycolipid binding"/>
    <property type="evidence" value="ECO:0000314"/>
    <property type="project" value="UniProtKB"/>
</dbReference>
<dbReference type="FunFam" id="1.25.40.20:FF:000049">
    <property type="entry name" value="Ankyrin repeat domain-containing protein 2"/>
    <property type="match status" value="1"/>
</dbReference>
<dbReference type="FunFam" id="1.25.40.20:FF:000106">
    <property type="entry name" value="Ankyrin repeat domain-containing protein 2"/>
    <property type="match status" value="1"/>
</dbReference>
<dbReference type="Gene3D" id="1.10.260.100">
    <property type="match status" value="1"/>
</dbReference>
<dbReference type="Gene3D" id="1.25.40.20">
    <property type="entry name" value="Ankyrin repeat-containing domain"/>
    <property type="match status" value="1"/>
</dbReference>
<dbReference type="InterPro" id="IPR002110">
    <property type="entry name" value="Ankyrin_rpt"/>
</dbReference>
<dbReference type="InterPro" id="IPR036770">
    <property type="entry name" value="Ankyrin_rpt-contain_sf"/>
</dbReference>
<dbReference type="InterPro" id="IPR041243">
    <property type="entry name" value="STI1/HOP_DP"/>
</dbReference>
<dbReference type="PANTHER" id="PTHR24203:SF61">
    <property type="entry name" value="ANKYRIN REPEAT DOMAIN-CONTAINING PROTEIN 2A-RELATED"/>
    <property type="match status" value="1"/>
</dbReference>
<dbReference type="PANTHER" id="PTHR24203">
    <property type="entry name" value="ANKYRIN REPEAT FAMILY PROTEIN"/>
    <property type="match status" value="1"/>
</dbReference>
<dbReference type="Pfam" id="PF12796">
    <property type="entry name" value="Ank_2"/>
    <property type="match status" value="1"/>
</dbReference>
<dbReference type="Pfam" id="PF17830">
    <property type="entry name" value="STI1-HOP_DP"/>
    <property type="match status" value="1"/>
</dbReference>
<dbReference type="SMART" id="SM00248">
    <property type="entry name" value="ANK"/>
    <property type="match status" value="3"/>
</dbReference>
<dbReference type="SUPFAM" id="SSF48403">
    <property type="entry name" value="Ankyrin repeat"/>
    <property type="match status" value="1"/>
</dbReference>
<dbReference type="PROSITE" id="PS50297">
    <property type="entry name" value="ANK_REP_REGION"/>
    <property type="match status" value="1"/>
</dbReference>
<dbReference type="PROSITE" id="PS50088">
    <property type="entry name" value="ANK_REPEAT"/>
    <property type="match status" value="2"/>
</dbReference>
<sequence>MASNSEKNPLLSDEKPKSTEENKSSKPESASGSSTSSAMPGLNFNAFDFSNMASILNDPSIREMAEQIAKDPAFNQLAEQLQRSIPNAGQEGGFPNFDPQQYVNTMQQVMHNPEFKTMAEKLGTALVQDPQMSPFLDAFSNPETAEHFTERMARMKEDPELKPILDEIDAGGPSAMMKYWNDPEVLKKLGEAMGMPVAGLPDQTVSAEPEVAEEGEEEESIVHQTASLGDVEGLKAALASGGNKDEEDSEGRTALHFACGYGELKCAQVLIDAGASVNAVDKNKNTPLHYAAGYGRKECVSLLLENGAAVTLQNLDEKTPIDVAKLNSQLEVVKLLEKDAFL</sequence>
<gene>
    <name evidence="9" type="primary">AKR2A</name>
    <name type="synonym">AFT</name>
    <name type="synonym">AKR2</name>
    <name type="ordered locus">At4g35450</name>
    <name type="ORF">F15J1.20</name>
</gene>
<organism>
    <name type="scientific">Arabidopsis thaliana</name>
    <name type="common">Mouse-ear cress</name>
    <dbReference type="NCBI Taxonomy" id="3702"/>
    <lineage>
        <taxon>Eukaryota</taxon>
        <taxon>Viridiplantae</taxon>
        <taxon>Streptophyta</taxon>
        <taxon>Embryophyta</taxon>
        <taxon>Tracheophyta</taxon>
        <taxon>Spermatophyta</taxon>
        <taxon>Magnoliopsida</taxon>
        <taxon>eudicotyledons</taxon>
        <taxon>Gunneridae</taxon>
        <taxon>Pentapetalae</taxon>
        <taxon>rosids</taxon>
        <taxon>malvids</taxon>
        <taxon>Brassicales</taxon>
        <taxon>Brassicaceae</taxon>
        <taxon>Camelineae</taxon>
        <taxon>Arabidopsis</taxon>
    </lineage>
</organism>
<reference key="1">
    <citation type="online journal article" date="1998" name="Plant Gene Register">
        <title>Nucleotide sequence of a cDNA clone containing tandem ankyrin repeats and a glycosyl hydrolase family I signature from Arabidopsis thaliana.</title>
        <authorList>
            <person name="Wang J."/>
            <person name="Hocart C.H."/>
            <person name="Wei K.-J."/>
            <person name="John P.C.L."/>
        </authorList>
        <locator>PGR98-150</locator>
    </citation>
    <scope>NUCLEOTIDE SEQUENCE [MRNA]</scope>
    <source>
        <strain>cv. Landsberg erecta</strain>
    </source>
</reference>
<reference key="2">
    <citation type="journal article" date="2002" name="Plant J.">
        <title>An ankyrin repeat-containing protein plays a role in both disease resistance and antioxidation metabolism.</title>
        <authorList>
            <person name="Yan J."/>
            <person name="Wang J."/>
            <person name="Zhang H."/>
        </authorList>
    </citation>
    <scope>NUCLEOTIDE SEQUENCE [MRNA]</scope>
    <scope>FUNCTION</scope>
    <scope>INTERACTION WITH APX3 AND GRF6</scope>
    <scope>TISSUE SPECIFICITY</scope>
    <source>
        <strain>cv. C24</strain>
    </source>
</reference>
<reference key="3">
    <citation type="journal article" date="1999" name="Nature">
        <title>Sequence and analysis of chromosome 4 of the plant Arabidopsis thaliana.</title>
        <authorList>
            <person name="Mayer K.F.X."/>
            <person name="Schueller C."/>
            <person name="Wambutt R."/>
            <person name="Murphy G."/>
            <person name="Volckaert G."/>
            <person name="Pohl T."/>
            <person name="Duesterhoeft A."/>
            <person name="Stiekema W."/>
            <person name="Entian K.-D."/>
            <person name="Terryn N."/>
            <person name="Harris B."/>
            <person name="Ansorge W."/>
            <person name="Brandt P."/>
            <person name="Grivell L.A."/>
            <person name="Rieger M."/>
            <person name="Weichselgartner M."/>
            <person name="de Simone V."/>
            <person name="Obermaier B."/>
            <person name="Mache R."/>
            <person name="Mueller M."/>
            <person name="Kreis M."/>
            <person name="Delseny M."/>
            <person name="Puigdomenech P."/>
            <person name="Watson M."/>
            <person name="Schmidtheini T."/>
            <person name="Reichert B."/>
            <person name="Portetelle D."/>
            <person name="Perez-Alonso M."/>
            <person name="Boutry M."/>
            <person name="Bancroft I."/>
            <person name="Vos P."/>
            <person name="Hoheisel J."/>
            <person name="Zimmermann W."/>
            <person name="Wedler H."/>
            <person name="Ridley P."/>
            <person name="Langham S.-A."/>
            <person name="McCullagh B."/>
            <person name="Bilham L."/>
            <person name="Robben J."/>
            <person name="van der Schueren J."/>
            <person name="Grymonprez B."/>
            <person name="Chuang Y.-J."/>
            <person name="Vandenbussche F."/>
            <person name="Braeken M."/>
            <person name="Weltjens I."/>
            <person name="Voet M."/>
            <person name="Bastiaens I."/>
            <person name="Aert R."/>
            <person name="Defoor E."/>
            <person name="Weitzenegger T."/>
            <person name="Bothe G."/>
            <person name="Ramsperger U."/>
            <person name="Hilbert H."/>
            <person name="Braun M."/>
            <person name="Holzer E."/>
            <person name="Brandt A."/>
            <person name="Peters S."/>
            <person name="van Staveren M."/>
            <person name="Dirkse W."/>
            <person name="Mooijman P."/>
            <person name="Klein Lankhorst R."/>
            <person name="Rose M."/>
            <person name="Hauf J."/>
            <person name="Koetter P."/>
            <person name="Berneiser S."/>
            <person name="Hempel S."/>
            <person name="Feldpausch M."/>
            <person name="Lamberth S."/>
            <person name="Van den Daele H."/>
            <person name="De Keyser A."/>
            <person name="Buysshaert C."/>
            <person name="Gielen J."/>
            <person name="Villarroel R."/>
            <person name="De Clercq R."/>
            <person name="van Montagu M."/>
            <person name="Rogers J."/>
            <person name="Cronin A."/>
            <person name="Quail M.A."/>
            <person name="Bray-Allen S."/>
            <person name="Clark L."/>
            <person name="Doggett J."/>
            <person name="Hall S."/>
            <person name="Kay M."/>
            <person name="Lennard N."/>
            <person name="McLay K."/>
            <person name="Mayes R."/>
            <person name="Pettett A."/>
            <person name="Rajandream M.A."/>
            <person name="Lyne M."/>
            <person name="Benes V."/>
            <person name="Rechmann S."/>
            <person name="Borkova D."/>
            <person name="Bloecker H."/>
            <person name="Scharfe M."/>
            <person name="Grimm M."/>
            <person name="Loehnert T.-H."/>
            <person name="Dose S."/>
            <person name="de Haan M."/>
            <person name="Maarse A.C."/>
            <person name="Schaefer M."/>
            <person name="Mueller-Auer S."/>
            <person name="Gabel C."/>
            <person name="Fuchs M."/>
            <person name="Fartmann B."/>
            <person name="Granderath K."/>
            <person name="Dauner D."/>
            <person name="Herzl A."/>
            <person name="Neumann S."/>
            <person name="Argiriou A."/>
            <person name="Vitale D."/>
            <person name="Liguori R."/>
            <person name="Piravandi E."/>
            <person name="Massenet O."/>
            <person name="Quigley F."/>
            <person name="Clabauld G."/>
            <person name="Muendlein A."/>
            <person name="Felber R."/>
            <person name="Schnabl S."/>
            <person name="Hiller R."/>
            <person name="Schmidt W."/>
            <person name="Lecharny A."/>
            <person name="Aubourg S."/>
            <person name="Chefdor F."/>
            <person name="Cooke R."/>
            <person name="Berger C."/>
            <person name="Monfort A."/>
            <person name="Casacuberta E."/>
            <person name="Gibbons T."/>
            <person name="Weber N."/>
            <person name="Vandenbol M."/>
            <person name="Bargues M."/>
            <person name="Terol J."/>
            <person name="Torres A."/>
            <person name="Perez-Perez A."/>
            <person name="Purnelle B."/>
            <person name="Bent E."/>
            <person name="Johnson S."/>
            <person name="Tacon D."/>
            <person name="Jesse T."/>
            <person name="Heijnen L."/>
            <person name="Schwarz S."/>
            <person name="Scholler P."/>
            <person name="Heber S."/>
            <person name="Francs P."/>
            <person name="Bielke C."/>
            <person name="Frishman D."/>
            <person name="Haase D."/>
            <person name="Lemcke K."/>
            <person name="Mewes H.-W."/>
            <person name="Stocker S."/>
            <person name="Zaccaria P."/>
            <person name="Bevan M."/>
            <person name="Wilson R.K."/>
            <person name="de la Bastide M."/>
            <person name="Habermann K."/>
            <person name="Parnell L."/>
            <person name="Dedhia N."/>
            <person name="Gnoj L."/>
            <person name="Schutz K."/>
            <person name="Huang E."/>
            <person name="Spiegel L."/>
            <person name="Sekhon M."/>
            <person name="Murray J."/>
            <person name="Sheet P."/>
            <person name="Cordes M."/>
            <person name="Abu-Threideh J."/>
            <person name="Stoneking T."/>
            <person name="Kalicki J."/>
            <person name="Graves T."/>
            <person name="Harmon G."/>
            <person name="Edwards J."/>
            <person name="Latreille P."/>
            <person name="Courtney L."/>
            <person name="Cloud J."/>
            <person name="Abbott A."/>
            <person name="Scott K."/>
            <person name="Johnson D."/>
            <person name="Minx P."/>
            <person name="Bentley D."/>
            <person name="Fulton B."/>
            <person name="Miller N."/>
            <person name="Greco T."/>
            <person name="Kemp K."/>
            <person name="Kramer J."/>
            <person name="Fulton L."/>
            <person name="Mardis E."/>
            <person name="Dante M."/>
            <person name="Pepin K."/>
            <person name="Hillier L.W."/>
            <person name="Nelson J."/>
            <person name="Spieth J."/>
            <person name="Ryan E."/>
            <person name="Andrews S."/>
            <person name="Geisel C."/>
            <person name="Layman D."/>
            <person name="Du H."/>
            <person name="Ali J."/>
            <person name="Berghoff A."/>
            <person name="Jones K."/>
            <person name="Drone K."/>
            <person name="Cotton M."/>
            <person name="Joshu C."/>
            <person name="Antonoiu B."/>
            <person name="Zidanic M."/>
            <person name="Strong C."/>
            <person name="Sun H."/>
            <person name="Lamar B."/>
            <person name="Yordan C."/>
            <person name="Ma P."/>
            <person name="Zhong J."/>
            <person name="Preston R."/>
            <person name="Vil D."/>
            <person name="Shekher M."/>
            <person name="Matero A."/>
            <person name="Shah R."/>
            <person name="Swaby I.K."/>
            <person name="O'Shaughnessy A."/>
            <person name="Rodriguez M."/>
            <person name="Hoffman J."/>
            <person name="Till S."/>
            <person name="Granat S."/>
            <person name="Shohdy N."/>
            <person name="Hasegawa A."/>
            <person name="Hameed A."/>
            <person name="Lodhi M."/>
            <person name="Johnson A."/>
            <person name="Chen E."/>
            <person name="Marra M.A."/>
            <person name="Martienssen R."/>
            <person name="McCombie W.R."/>
        </authorList>
    </citation>
    <scope>NUCLEOTIDE SEQUENCE [LARGE SCALE GENOMIC DNA]</scope>
    <source>
        <strain>cv. Columbia</strain>
    </source>
</reference>
<reference key="4">
    <citation type="journal article" date="2017" name="Plant J.">
        <title>Araport11: a complete reannotation of the Arabidopsis thaliana reference genome.</title>
        <authorList>
            <person name="Cheng C.Y."/>
            <person name="Krishnakumar V."/>
            <person name="Chan A.P."/>
            <person name="Thibaud-Nissen F."/>
            <person name="Schobel S."/>
            <person name="Town C.D."/>
        </authorList>
    </citation>
    <scope>GENOME REANNOTATION</scope>
    <source>
        <strain>cv. Columbia</strain>
    </source>
</reference>
<reference key="5">
    <citation type="journal article" date="2003" name="Science">
        <title>Empirical analysis of transcriptional activity in the Arabidopsis genome.</title>
        <authorList>
            <person name="Yamada K."/>
            <person name="Lim J."/>
            <person name="Dale J.M."/>
            <person name="Chen H."/>
            <person name="Shinn P."/>
            <person name="Palm C.J."/>
            <person name="Southwick A.M."/>
            <person name="Wu H.C."/>
            <person name="Kim C.J."/>
            <person name="Nguyen M."/>
            <person name="Pham P.K."/>
            <person name="Cheuk R.F."/>
            <person name="Karlin-Newmann G."/>
            <person name="Liu S.X."/>
            <person name="Lam B."/>
            <person name="Sakano H."/>
            <person name="Wu T."/>
            <person name="Yu G."/>
            <person name="Miranda M."/>
            <person name="Quach H.L."/>
            <person name="Tripp M."/>
            <person name="Chang C.H."/>
            <person name="Lee J.M."/>
            <person name="Toriumi M.J."/>
            <person name="Chan M.M."/>
            <person name="Tang C.C."/>
            <person name="Onodera C.S."/>
            <person name="Deng J.M."/>
            <person name="Akiyama K."/>
            <person name="Ansari Y."/>
            <person name="Arakawa T."/>
            <person name="Banh J."/>
            <person name="Banno F."/>
            <person name="Bowser L."/>
            <person name="Brooks S.Y."/>
            <person name="Carninci P."/>
            <person name="Chao Q."/>
            <person name="Choy N."/>
            <person name="Enju A."/>
            <person name="Goldsmith A.D."/>
            <person name="Gurjal M."/>
            <person name="Hansen N.F."/>
            <person name="Hayashizaki Y."/>
            <person name="Johnson-Hopson C."/>
            <person name="Hsuan V.W."/>
            <person name="Iida K."/>
            <person name="Karnes M."/>
            <person name="Khan S."/>
            <person name="Koesema E."/>
            <person name="Ishida J."/>
            <person name="Jiang P.X."/>
            <person name="Jones T."/>
            <person name="Kawai J."/>
            <person name="Kamiya A."/>
            <person name="Meyers C."/>
            <person name="Nakajima M."/>
            <person name="Narusaka M."/>
            <person name="Seki M."/>
            <person name="Sakurai T."/>
            <person name="Satou M."/>
            <person name="Tamse R."/>
            <person name="Vaysberg M."/>
            <person name="Wallender E.K."/>
            <person name="Wong C."/>
            <person name="Yamamura Y."/>
            <person name="Yuan S."/>
            <person name="Shinozaki K."/>
            <person name="Davis R.W."/>
            <person name="Theologis A."/>
            <person name="Ecker J.R."/>
        </authorList>
    </citation>
    <scope>NUCLEOTIDE SEQUENCE [LARGE SCALE MRNA]</scope>
    <source>
        <strain>cv. Columbia</strain>
    </source>
</reference>
<reference key="6">
    <citation type="submission" date="2002-03" db="EMBL/GenBank/DDBJ databases">
        <title>Full-length cDNA from Arabidopsis thaliana.</title>
        <authorList>
            <person name="Brover V.V."/>
            <person name="Troukhan M.E."/>
            <person name="Alexandrov N.A."/>
            <person name="Lu Y.-P."/>
            <person name="Flavell R.B."/>
            <person name="Feldmann K.A."/>
        </authorList>
    </citation>
    <scope>NUCLEOTIDE SEQUENCE [LARGE SCALE MRNA]</scope>
</reference>
<reference key="7">
    <citation type="journal article" date="2008" name="Nat. Cell Biol.">
        <title>AKR2A-mediated import of chloroplast outer membrane proteins is essential for chloroplast biogenesis.</title>
        <authorList>
            <person name="Bae W."/>
            <person name="Lee Y.J."/>
            <person name="Kim D.H."/>
            <person name="Lee J."/>
            <person name="Kim S."/>
            <person name="Sohn E.J."/>
            <person name="Hwang I."/>
        </authorList>
    </citation>
    <scope>FUNCTION</scope>
    <scope>DISRUPTION PHENOTYPE</scope>
    <scope>SUBUNIT</scope>
    <source>
        <strain>cv. Columbia</strain>
    </source>
</reference>
<reference key="8">
    <citation type="journal article" date="2010" name="Plant Cell">
        <title>ANKYRIN REPEAT-CONTAINING PROTEIN 2A is an essential molecular chaperone for peroxisomal membrane-bound ASCORBATE PEROXIDASE3 in Arabidopsis.</title>
        <authorList>
            <person name="Shen G."/>
            <person name="Kuppu S."/>
            <person name="Venkataramani S."/>
            <person name="Wang J."/>
            <person name="Yan J."/>
            <person name="Qiu X."/>
            <person name="Zhang H."/>
        </authorList>
    </citation>
    <scope>FUNCTION</scope>
    <scope>DISRUPTION PHENOTYPE</scope>
    <scope>MUTAGENESIS OF SER-25; PRO-113 AND GLU-150</scope>
    <scope>INTERACTION WITH TOM20-4; CYTB5-E; CBR1; APX3; APX5 AND TOC34</scope>
    <scope>SUBCELLULAR LOCATION</scope>
    <source>
        <strain>cv. C24</strain>
        <strain>cv. Columbia</strain>
    </source>
</reference>
<reference key="9">
    <citation type="journal article" date="2010" name="Plant Signal. Behav.">
        <title>Is AKR2A an essential molecular chaperone for a class of membrane-bound proteins in plants?</title>
        <authorList>
            <person name="Zhang H."/>
            <person name="Li X."/>
            <person name="Zhang Y."/>
            <person name="Kuppu S."/>
            <person name="Shen G."/>
        </authorList>
    </citation>
    <scope>INTERACTION WITH APX3</scope>
    <scope>REVIEW</scope>
</reference>
<reference key="10">
    <citation type="journal article" date="2011" name="Plant Physiol.">
        <title>Small heat shock protein Hsp17.8 functions as an AKR2A cofactor in the targeting of chloroplast outer membrane proteins in Arabidopsis.</title>
        <authorList>
            <person name="Kim D.H."/>
            <person name="Xu Z.-Y."/>
            <person name="Na Y.J."/>
            <person name="Yoo Y.-J."/>
            <person name="Lee J."/>
            <person name="Sohn E.-J."/>
            <person name="Hwang I."/>
        </authorList>
    </citation>
    <scope>INTERACTION WITH HSP17.8; HSP17.4A; HSP17.6A AND HSP18.1</scope>
    <source>
        <strain>cv. Columbia</strain>
    </source>
</reference>
<reference key="11">
    <citation type="journal article" date="2014" name="Dev. Cell">
        <title>An ankyrin repeat domain of AKR2 drives chloroplast targeting through coincident binding of two chloroplast lipids.</title>
        <authorList>
            <person name="Kim D.H."/>
            <person name="Park M.-J."/>
            <person name="Gwon G.H."/>
            <person name="Silkov A."/>
            <person name="Xu Z.-Y."/>
            <person name="Yang E.C."/>
            <person name="Song S."/>
            <person name="Song K."/>
            <person name="Kim Y."/>
            <person name="Yoon H.S."/>
            <person name="Honig B."/>
            <person name="Cho W."/>
            <person name="Cho Y."/>
            <person name="Hwang I."/>
        </authorList>
    </citation>
    <scope>X-RAY CRYSTALLOGRAPHY (2.30 ANGSTROMS) OF 211-342</scope>
    <scope>FUNCTION</scope>
    <scope>DOMAIN</scope>
    <scope>SUBUNIT</scope>
    <scope>SUBCELLULAR LOCATION</scope>
    <scope>INTERACTION WITH MONOGALACTOSYLDIACYLGLYCEROL AND PHOSPHATIDYLGLYCEROL</scope>
    <scope>MUTAGENESIS OF HIS-223; GLU-246; TYR-294 AND ARG-296</scope>
</reference>
<evidence type="ECO:0000255" key="1"/>
<evidence type="ECO:0000256" key="2">
    <source>
        <dbReference type="SAM" id="MobiDB-lite"/>
    </source>
</evidence>
<evidence type="ECO:0000269" key="3">
    <source>
    </source>
</evidence>
<evidence type="ECO:0000269" key="4">
    <source>
    </source>
</evidence>
<evidence type="ECO:0000269" key="5">
    <source>
    </source>
</evidence>
<evidence type="ECO:0000269" key="6">
    <source>
    </source>
</evidence>
<evidence type="ECO:0000269" key="7">
    <source>
    </source>
</evidence>
<evidence type="ECO:0000269" key="8">
    <source>
    </source>
</evidence>
<evidence type="ECO:0000303" key="9">
    <source>
    </source>
</evidence>
<evidence type="ECO:0000305" key="10"/>
<evidence type="ECO:0007829" key="11">
    <source>
        <dbReference type="PDB" id="5EID"/>
    </source>
</evidence>
<keyword id="KW-0002">3D-structure</keyword>
<keyword id="KW-0025">Alternative splicing</keyword>
<keyword id="KW-0040">ANK repeat</keyword>
<keyword id="KW-0143">Chaperone</keyword>
<keyword id="KW-0150">Chloroplast</keyword>
<keyword id="KW-0963">Cytoplasm</keyword>
<keyword id="KW-0446">Lipid-binding</keyword>
<keyword id="KW-0472">Membrane</keyword>
<keyword id="KW-0539">Nucleus</keyword>
<keyword id="KW-0934">Plastid</keyword>
<keyword id="KW-1002">Plastid outer membrane</keyword>
<keyword id="KW-1185">Reference proteome</keyword>
<keyword id="KW-0677">Repeat</keyword>